<reference key="1">
    <citation type="journal article" date="1997" name="Nature">
        <title>Molecular basis of symbiosis between Rhizobium and legumes.</title>
        <authorList>
            <person name="Freiberg C.A."/>
            <person name="Fellay R."/>
            <person name="Bairoch A."/>
            <person name="Broughton W.J."/>
            <person name="Rosenthal A."/>
            <person name="Perret X."/>
        </authorList>
    </citation>
    <scope>NUCLEOTIDE SEQUENCE [LARGE SCALE GENOMIC DNA]</scope>
    <source>
        <strain>NBRC 101917 / NGR234</strain>
    </source>
</reference>
<reference key="2">
    <citation type="journal article" date="2009" name="Appl. Environ. Microbiol.">
        <title>Rhizobium sp. strain NGR234 possesses a remarkable number of secretion systems.</title>
        <authorList>
            <person name="Schmeisser C."/>
            <person name="Liesegang H."/>
            <person name="Krysciak D."/>
            <person name="Bakkou N."/>
            <person name="Le Quere A."/>
            <person name="Wollherr A."/>
            <person name="Heinemeyer I."/>
            <person name="Morgenstern B."/>
            <person name="Pommerening-Roeser A."/>
            <person name="Flores M."/>
            <person name="Palacios R."/>
            <person name="Brenner S."/>
            <person name="Gottschalk G."/>
            <person name="Schmitz R.A."/>
            <person name="Broughton W.J."/>
            <person name="Perret X."/>
            <person name="Strittmatter A.W."/>
            <person name="Streit W.R."/>
        </authorList>
    </citation>
    <scope>NUCLEOTIDE SEQUENCE [LARGE SCALE GENOMIC DNA]</scope>
    <source>
        <strain>NBRC 101917 / NGR234</strain>
    </source>
</reference>
<gene>
    <name type="primary">fixF</name>
    <name type="ordered locus">NGR_a03530</name>
    <name type="ORF">y4gK</name>
</gene>
<geneLocation type="plasmid">
    <name>sym pNGR234a</name>
</geneLocation>
<sequence>MDTMANSILGQEITFLKLDTRVIKNFDKVLTNNIEVVETSLWSVVRKNALKKGAAKALQACASSVLHKRSDYEFLTTGNVLRKKIRLPRLFGNKVISAAYSWIKRVQAALLLDYLKEHLSQYDWDQLIVVVFNGSNYPESVLAEASKGFKRVFVEDGFFPGTLQIDPVGINAANSVPRCSAFYKSGRDFSEGGLPTAVTNRSSKRKFTPVDLAPGFVFVPFQVPSDMQVTLHSPWVKDMYNFYDIVVNAAEQNPEEMFVIKEHPRFKRSVIGSRPPHPRVKFANGNITSELISNARTVVTINSTVGIEALLLGKQVITLGDSCYNIQDLVLRGNDMGRLNAALALRGWLPDDELRRQFLGFLWNYYLVKGSFTEPPTALASRILDCFELDSEVRGAIANLNN</sequence>
<feature type="chain" id="PRO_0000087259" description="Protein FixF">
    <location>
        <begin position="1"/>
        <end position="402"/>
    </location>
</feature>
<name>FIXF_SINFN</name>
<accession>P55467</accession>
<organism>
    <name type="scientific">Sinorhizobium fredii (strain NBRC 101917 / NGR234)</name>
    <dbReference type="NCBI Taxonomy" id="394"/>
    <lineage>
        <taxon>Bacteria</taxon>
        <taxon>Pseudomonadati</taxon>
        <taxon>Pseudomonadota</taxon>
        <taxon>Alphaproteobacteria</taxon>
        <taxon>Hyphomicrobiales</taxon>
        <taxon>Rhizobiaceae</taxon>
        <taxon>Sinorhizobium/Ensifer group</taxon>
        <taxon>Sinorhizobium</taxon>
    </lineage>
</organism>
<proteinExistence type="predicted"/>
<dbReference type="EMBL" id="U00090">
    <property type="protein sequence ID" value="AAB91685.1"/>
    <property type="molecule type" value="Genomic_DNA"/>
</dbReference>
<dbReference type="RefSeq" id="NP_443873.1">
    <property type="nucleotide sequence ID" value="NC_000914.2"/>
</dbReference>
<dbReference type="RefSeq" id="WP_010875367.1">
    <property type="nucleotide sequence ID" value="NC_000914.2"/>
</dbReference>
<dbReference type="SMR" id="P55467"/>
<dbReference type="KEGG" id="rhi:NGR_a03530"/>
<dbReference type="PATRIC" id="fig|394.7.peg.361"/>
<dbReference type="eggNOG" id="COG3562">
    <property type="taxonomic scope" value="Bacteria"/>
</dbReference>
<dbReference type="HOGENOM" id="CLU_057322_0_0_5"/>
<dbReference type="OrthoDB" id="6713140at2"/>
<dbReference type="Proteomes" id="UP000001054">
    <property type="component" value="Plasmid pNGR234a"/>
</dbReference>
<dbReference type="GO" id="GO:0009399">
    <property type="term" value="P:nitrogen fixation"/>
    <property type="evidence" value="ECO:0007669"/>
    <property type="project" value="UniProtKB-KW"/>
</dbReference>
<dbReference type="GO" id="GO:0000271">
    <property type="term" value="P:polysaccharide biosynthetic process"/>
    <property type="evidence" value="ECO:0007669"/>
    <property type="project" value="InterPro"/>
</dbReference>
<dbReference type="GO" id="GO:0015774">
    <property type="term" value="P:polysaccharide transport"/>
    <property type="evidence" value="ECO:0007669"/>
    <property type="project" value="InterPro"/>
</dbReference>
<dbReference type="CDD" id="cd16438">
    <property type="entry name" value="beta_Kdo_transferase_KpsS_like"/>
    <property type="match status" value="1"/>
</dbReference>
<dbReference type="InterPro" id="IPR007833">
    <property type="entry name" value="Capsule_polysaccharide_synth"/>
</dbReference>
<dbReference type="Pfam" id="PF05159">
    <property type="entry name" value="Capsule_synth"/>
    <property type="match status" value="1"/>
</dbReference>
<protein>
    <recommendedName>
        <fullName>Protein FixF</fullName>
    </recommendedName>
</protein>
<keyword id="KW-0535">Nitrogen fixation</keyword>
<keyword id="KW-0614">Plasmid</keyword>
<keyword id="KW-1185">Reference proteome</keyword>